<comment type="subunit">
    <text evidence="1">The basal body constitutes a major portion of the flagellar organelle and consists of four rings (L,P,S, and M) mounted on a central rod. The rod consists of about 26 subunits of FlgG in the distal portion, and FlgB, FlgC and FlgF are thought to build up the proximal portion of the rod with about 6 subunits each (By similarity).</text>
</comment>
<comment type="subcellular location">
    <subcellularLocation>
        <location evidence="1">Bacterial flagellum basal body</location>
    </subcellularLocation>
</comment>
<comment type="similarity">
    <text evidence="2">Belongs to the flagella basal body rod proteins family.</text>
</comment>
<name>FLGC_BORBU</name>
<keyword id="KW-0975">Bacterial flagellum</keyword>
<keyword id="KW-1185">Reference proteome</keyword>
<feature type="chain" id="PRO_0000180798" description="Flagellar basal-body rod protein FlgC">
    <location>
        <begin position="1"/>
        <end position="152"/>
    </location>
</feature>
<feature type="sequence conflict" description="In Ref. 3; AAB04619." evidence="2" ref="3">
    <original>GPYRR</original>
    <variation>DLIEG</variation>
    <location>
        <begin position="40"/>
        <end position="44"/>
    </location>
</feature>
<protein>
    <recommendedName>
        <fullName>Flagellar basal-body rod protein FlgC</fullName>
    </recommendedName>
</protein>
<organism>
    <name type="scientific">Borreliella burgdorferi (strain ATCC 35210 / DSM 4680 / CIP 102532 / B31)</name>
    <name type="common">Borrelia burgdorferi</name>
    <dbReference type="NCBI Taxonomy" id="224326"/>
    <lineage>
        <taxon>Bacteria</taxon>
        <taxon>Pseudomonadati</taxon>
        <taxon>Spirochaetota</taxon>
        <taxon>Spirochaetia</taxon>
        <taxon>Spirochaetales</taxon>
        <taxon>Borreliaceae</taxon>
        <taxon>Borreliella</taxon>
    </lineage>
</organism>
<sequence>MGLFSSINVASTGLTAQRLRIDVISNNIANVSTSRTPDGGPYRRQRIIFAPRVNNPYWKGPFIPDYLDNGIGQGVRVASIEKDKSPLKLKYDPAHPDSISSGDKKGYVELPNVNLVEEMVDMISASRAYEANSTVINSSKSMFRSALAILQG</sequence>
<dbReference type="EMBL" id="U43739">
    <property type="protein sequence ID" value="AAA85616.1"/>
    <property type="molecule type" value="Genomic_DNA"/>
</dbReference>
<dbReference type="EMBL" id="L76303">
    <property type="protein sequence ID" value="AAB51408.1"/>
    <property type="molecule type" value="Genomic_DNA"/>
</dbReference>
<dbReference type="EMBL" id="L40499">
    <property type="protein sequence ID" value="AAB04619.1"/>
    <property type="molecule type" value="Genomic_DNA"/>
</dbReference>
<dbReference type="EMBL" id="AE000783">
    <property type="protein sequence ID" value="AAC66655.1"/>
    <property type="molecule type" value="Genomic_DNA"/>
</dbReference>
<dbReference type="PIR" id="E70136">
    <property type="entry name" value="E70136"/>
</dbReference>
<dbReference type="RefSeq" id="NP_212427.1">
    <property type="nucleotide sequence ID" value="NC_001318.1"/>
</dbReference>
<dbReference type="RefSeq" id="WP_002657104.1">
    <property type="nucleotide sequence ID" value="NC_001318.1"/>
</dbReference>
<dbReference type="SMR" id="Q57466"/>
<dbReference type="STRING" id="224326.BB_0293"/>
<dbReference type="PaxDb" id="224326-BB_0293"/>
<dbReference type="EnsemblBacteria" id="AAC66655">
    <property type="protein sequence ID" value="AAC66655"/>
    <property type="gene ID" value="BB_0293"/>
</dbReference>
<dbReference type="KEGG" id="bbu:BB_0293"/>
<dbReference type="PATRIC" id="fig|224326.49.peg.692"/>
<dbReference type="HOGENOM" id="CLU_123272_0_0_12"/>
<dbReference type="OrthoDB" id="9794148at2"/>
<dbReference type="Proteomes" id="UP000001807">
    <property type="component" value="Chromosome"/>
</dbReference>
<dbReference type="GO" id="GO:0030694">
    <property type="term" value="C:bacterial-type flagellum basal body, rod"/>
    <property type="evidence" value="ECO:0007669"/>
    <property type="project" value="InterPro"/>
</dbReference>
<dbReference type="GO" id="GO:0071978">
    <property type="term" value="P:bacterial-type flagellum-dependent swarming motility"/>
    <property type="evidence" value="ECO:0007669"/>
    <property type="project" value="TreeGrafter"/>
</dbReference>
<dbReference type="InterPro" id="IPR001444">
    <property type="entry name" value="Flag_bb_rod_N"/>
</dbReference>
<dbReference type="InterPro" id="IPR019776">
    <property type="entry name" value="Flagellar_basal_body_rod_CS"/>
</dbReference>
<dbReference type="InterPro" id="IPR010930">
    <property type="entry name" value="Flg_bb/hook_C_dom"/>
</dbReference>
<dbReference type="InterPro" id="IPR006299">
    <property type="entry name" value="FlgC"/>
</dbReference>
<dbReference type="NCBIfam" id="TIGR01395">
    <property type="entry name" value="FlgC"/>
    <property type="match status" value="1"/>
</dbReference>
<dbReference type="PANTHER" id="PTHR30435:SF2">
    <property type="entry name" value="FLAGELLAR BASAL-BODY ROD PROTEIN FLGC"/>
    <property type="match status" value="1"/>
</dbReference>
<dbReference type="PANTHER" id="PTHR30435">
    <property type="entry name" value="FLAGELLAR PROTEIN"/>
    <property type="match status" value="1"/>
</dbReference>
<dbReference type="Pfam" id="PF00460">
    <property type="entry name" value="Flg_bb_rod"/>
    <property type="match status" value="1"/>
</dbReference>
<dbReference type="Pfam" id="PF06429">
    <property type="entry name" value="Flg_bbr_C"/>
    <property type="match status" value="1"/>
</dbReference>
<dbReference type="PROSITE" id="PS00588">
    <property type="entry name" value="FLAGELLA_BB_ROD"/>
    <property type="match status" value="1"/>
</dbReference>
<evidence type="ECO:0000250" key="1"/>
<evidence type="ECO:0000305" key="2"/>
<proteinExistence type="inferred from homology"/>
<reference key="1">
    <citation type="submission" date="1995-12" db="EMBL/GenBank/DDBJ databases">
        <authorList>
            <person name="Dunn J.J."/>
            <person name="Butler-Loffredo L."/>
            <person name="Kieleczawa J."/>
            <person name="Medalle J."/>
            <person name="Luft B.J."/>
        </authorList>
    </citation>
    <scope>NUCLEOTIDE SEQUENCE [GENOMIC DNA]</scope>
    <source>
        <strain>ATCC 35210 / DSM 4680 / CIP 102532 / B31</strain>
    </source>
</reference>
<reference key="2">
    <citation type="submission" date="1996-02" db="EMBL/GenBank/DDBJ databases">
        <authorList>
            <person name="Ge Y."/>
            <person name="Saint-Girons I."/>
            <person name="Old I.G."/>
            <person name="Charon N.W."/>
        </authorList>
    </citation>
    <scope>NUCLEOTIDE SEQUENCE [GENOMIC DNA]</scope>
    <source>
        <strain>212</strain>
    </source>
</reference>
<reference key="3">
    <citation type="submission" date="1996-07" db="EMBL/GenBank/DDBJ databases">
        <authorList>
            <person name="Ge Y."/>
            <person name="Saint-Girons I."/>
            <person name="Old I.G."/>
            <person name="Yelton D.B."/>
            <person name="Charon N.W."/>
        </authorList>
    </citation>
    <scope>NUCLEOTIDE SEQUENCE [GENOMIC DNA]</scope>
    <source>
        <strain>212</strain>
    </source>
</reference>
<reference key="4">
    <citation type="journal article" date="1997" name="Nature">
        <title>Genomic sequence of a Lyme disease spirochaete, Borrelia burgdorferi.</title>
        <authorList>
            <person name="Fraser C.M."/>
            <person name="Casjens S."/>
            <person name="Huang W.M."/>
            <person name="Sutton G.G."/>
            <person name="Clayton R.A."/>
            <person name="Lathigra R."/>
            <person name="White O."/>
            <person name="Ketchum K.A."/>
            <person name="Dodson R.J."/>
            <person name="Hickey E.K."/>
            <person name="Gwinn M.L."/>
            <person name="Dougherty B.A."/>
            <person name="Tomb J.-F."/>
            <person name="Fleischmann R.D."/>
            <person name="Richardson D.L."/>
            <person name="Peterson J.D."/>
            <person name="Kerlavage A.R."/>
            <person name="Quackenbush J."/>
            <person name="Salzberg S.L."/>
            <person name="Hanson M."/>
            <person name="van Vugt R."/>
            <person name="Palmer N."/>
            <person name="Adams M.D."/>
            <person name="Gocayne J.D."/>
            <person name="Weidman J.F."/>
            <person name="Utterback T.R."/>
            <person name="Watthey L."/>
            <person name="McDonald L.A."/>
            <person name="Artiach P."/>
            <person name="Bowman C."/>
            <person name="Garland S.A."/>
            <person name="Fujii C."/>
            <person name="Cotton M.D."/>
            <person name="Horst K."/>
            <person name="Roberts K.M."/>
            <person name="Hatch B."/>
            <person name="Smith H.O."/>
            <person name="Venter J.C."/>
        </authorList>
    </citation>
    <scope>NUCLEOTIDE SEQUENCE [LARGE SCALE GENOMIC DNA]</scope>
    <source>
        <strain>ATCC 35210 / DSM 4680 / CIP 102532 / B31</strain>
    </source>
</reference>
<gene>
    <name type="primary">flgC</name>
    <name type="ordered locus">BB_0293</name>
</gene>
<accession>Q57466</accession>
<accession>Q44939</accession>